<reference key="1">
    <citation type="journal article" date="2004" name="Proc. Natl. Acad. Sci. U.S.A.">
        <title>Genome sequence of the enterobacterial phytopathogen Erwinia carotovora subsp. atroseptica and characterization of virulence factors.</title>
        <authorList>
            <person name="Bell K.S."/>
            <person name="Sebaihia M."/>
            <person name="Pritchard L."/>
            <person name="Holden M.T.G."/>
            <person name="Hyman L.J."/>
            <person name="Holeva M.C."/>
            <person name="Thomson N.R."/>
            <person name="Bentley S.D."/>
            <person name="Churcher L.J.C."/>
            <person name="Mungall K."/>
            <person name="Atkin R."/>
            <person name="Bason N."/>
            <person name="Brooks K."/>
            <person name="Chillingworth T."/>
            <person name="Clark K."/>
            <person name="Doggett J."/>
            <person name="Fraser A."/>
            <person name="Hance Z."/>
            <person name="Hauser H."/>
            <person name="Jagels K."/>
            <person name="Moule S."/>
            <person name="Norbertczak H."/>
            <person name="Ormond D."/>
            <person name="Price C."/>
            <person name="Quail M.A."/>
            <person name="Sanders M."/>
            <person name="Walker D."/>
            <person name="Whitehead S."/>
            <person name="Salmond G.P.C."/>
            <person name="Birch P.R.J."/>
            <person name="Parkhill J."/>
            <person name="Toth I.K."/>
        </authorList>
    </citation>
    <scope>NUCLEOTIDE SEQUENCE [LARGE SCALE GENOMIC DNA]</scope>
    <source>
        <strain>SCRI 1043 / ATCC BAA-672</strain>
    </source>
</reference>
<accession>Q6DA26</accession>
<sequence length="104" mass="12285">MLRKAFVMSVFPDSHDEYQRRHNPIWPELAEVLKNHGAHHYSIFLDKQRNLLFGYVEVESEARWEAIAQTDVCQRWWKHMGDVMPSNPDNSPISDALDPVFYLD</sequence>
<name>RHAM_PECAS</name>
<feature type="chain" id="PRO_0000344568" description="L-rhamnose mutarotase">
    <location>
        <begin position="1"/>
        <end position="104"/>
    </location>
</feature>
<feature type="region of interest" description="Disordered" evidence="2">
    <location>
        <begin position="85"/>
        <end position="104"/>
    </location>
</feature>
<feature type="active site" description="Proton donor" evidence="1">
    <location>
        <position position="22"/>
    </location>
</feature>
<feature type="binding site" evidence="1">
    <location>
        <position position="18"/>
    </location>
    <ligand>
        <name>substrate</name>
    </ligand>
</feature>
<feature type="binding site" evidence="1">
    <location>
        <position position="41"/>
    </location>
    <ligand>
        <name>substrate</name>
    </ligand>
</feature>
<feature type="binding site" evidence="1">
    <location>
        <begin position="76"/>
        <end position="77"/>
    </location>
    <ligand>
        <name>substrate</name>
    </ligand>
</feature>
<keyword id="KW-0119">Carbohydrate metabolism</keyword>
<keyword id="KW-0963">Cytoplasm</keyword>
<keyword id="KW-0413">Isomerase</keyword>
<keyword id="KW-1185">Reference proteome</keyword>
<keyword id="KW-0684">Rhamnose metabolism</keyword>
<evidence type="ECO:0000255" key="1">
    <source>
        <dbReference type="HAMAP-Rule" id="MF_01663"/>
    </source>
</evidence>
<evidence type="ECO:0000256" key="2">
    <source>
        <dbReference type="SAM" id="MobiDB-lite"/>
    </source>
</evidence>
<gene>
    <name evidence="1" type="primary">rhaM</name>
    <name type="ordered locus">ECA0437</name>
</gene>
<organism>
    <name type="scientific">Pectobacterium atrosepticum (strain SCRI 1043 / ATCC BAA-672)</name>
    <name type="common">Erwinia carotovora subsp. atroseptica</name>
    <dbReference type="NCBI Taxonomy" id="218491"/>
    <lineage>
        <taxon>Bacteria</taxon>
        <taxon>Pseudomonadati</taxon>
        <taxon>Pseudomonadota</taxon>
        <taxon>Gammaproteobacteria</taxon>
        <taxon>Enterobacterales</taxon>
        <taxon>Pectobacteriaceae</taxon>
        <taxon>Pectobacterium</taxon>
    </lineage>
</organism>
<protein>
    <recommendedName>
        <fullName evidence="1">L-rhamnose mutarotase</fullName>
        <ecNumber evidence="1">5.1.3.32</ecNumber>
    </recommendedName>
    <alternativeName>
        <fullName evidence="1">Rhamnose 1-epimerase</fullName>
    </alternativeName>
    <alternativeName>
        <fullName evidence="1">Type-3 mutarotase</fullName>
    </alternativeName>
</protein>
<comment type="function">
    <text evidence="1">Involved in the anomeric conversion of L-rhamnose.</text>
</comment>
<comment type="catalytic activity">
    <reaction evidence="1">
        <text>alpha-L-rhamnose = beta-L-rhamnose</text>
        <dbReference type="Rhea" id="RHEA:25584"/>
        <dbReference type="ChEBI" id="CHEBI:27586"/>
        <dbReference type="ChEBI" id="CHEBI:27907"/>
        <dbReference type="EC" id="5.1.3.32"/>
    </reaction>
</comment>
<comment type="pathway">
    <text evidence="1">Carbohydrate metabolism; L-rhamnose metabolism.</text>
</comment>
<comment type="subunit">
    <text evidence="1">Homodimer.</text>
</comment>
<comment type="subcellular location">
    <subcellularLocation>
        <location evidence="1">Cytoplasm</location>
    </subcellularLocation>
</comment>
<comment type="similarity">
    <text evidence="1">Belongs to the rhamnose mutarotase family.</text>
</comment>
<proteinExistence type="inferred from homology"/>
<dbReference type="EC" id="5.1.3.32" evidence="1"/>
<dbReference type="EMBL" id="BX950851">
    <property type="protein sequence ID" value="CAG73352.1"/>
    <property type="molecule type" value="Genomic_DNA"/>
</dbReference>
<dbReference type="RefSeq" id="WP_011092059.1">
    <property type="nucleotide sequence ID" value="NC_004547.2"/>
</dbReference>
<dbReference type="SMR" id="Q6DA26"/>
<dbReference type="STRING" id="218491.ECA0437"/>
<dbReference type="GeneID" id="57207291"/>
<dbReference type="KEGG" id="eca:ECA0437"/>
<dbReference type="PATRIC" id="fig|218491.5.peg.441"/>
<dbReference type="eggNOG" id="COG3254">
    <property type="taxonomic scope" value="Bacteria"/>
</dbReference>
<dbReference type="HOGENOM" id="CLU_100689_2_0_6"/>
<dbReference type="OrthoDB" id="9799608at2"/>
<dbReference type="UniPathway" id="UPA00125"/>
<dbReference type="Proteomes" id="UP000007966">
    <property type="component" value="Chromosome"/>
</dbReference>
<dbReference type="GO" id="GO:0005737">
    <property type="term" value="C:cytoplasm"/>
    <property type="evidence" value="ECO:0007669"/>
    <property type="project" value="UniProtKB-SubCell"/>
</dbReference>
<dbReference type="GO" id="GO:0062192">
    <property type="term" value="F:L-rhamnose mutarotase activity"/>
    <property type="evidence" value="ECO:0007669"/>
    <property type="project" value="UniProtKB-EC"/>
</dbReference>
<dbReference type="GO" id="GO:0019301">
    <property type="term" value="P:rhamnose catabolic process"/>
    <property type="evidence" value="ECO:0007669"/>
    <property type="project" value="TreeGrafter"/>
</dbReference>
<dbReference type="Gene3D" id="3.30.70.100">
    <property type="match status" value="1"/>
</dbReference>
<dbReference type="HAMAP" id="MF_01663">
    <property type="entry name" value="L_rham_rotase"/>
    <property type="match status" value="1"/>
</dbReference>
<dbReference type="InterPro" id="IPR011008">
    <property type="entry name" value="Dimeric_a/b-barrel"/>
</dbReference>
<dbReference type="InterPro" id="IPR013448">
    <property type="entry name" value="L-rhamnose_mutarotase"/>
</dbReference>
<dbReference type="InterPro" id="IPR008000">
    <property type="entry name" value="Rham/fucose_mutarotase"/>
</dbReference>
<dbReference type="NCBIfam" id="TIGR02625">
    <property type="entry name" value="YiiL_rotase"/>
    <property type="match status" value="1"/>
</dbReference>
<dbReference type="PANTHER" id="PTHR34389">
    <property type="entry name" value="L-RHAMNOSE MUTAROTASE"/>
    <property type="match status" value="1"/>
</dbReference>
<dbReference type="PANTHER" id="PTHR34389:SF2">
    <property type="entry name" value="L-RHAMNOSE MUTAROTASE"/>
    <property type="match status" value="1"/>
</dbReference>
<dbReference type="Pfam" id="PF05336">
    <property type="entry name" value="rhaM"/>
    <property type="match status" value="1"/>
</dbReference>
<dbReference type="SUPFAM" id="SSF54909">
    <property type="entry name" value="Dimeric alpha+beta barrel"/>
    <property type="match status" value="1"/>
</dbReference>